<sequence>MADSSLVGGGEEPEERVIEAALRPKNLHDFVGQHRVRKQLSLVLEASRMRGRSADHVLLSGPPGLGKTTLSMIIAAEMNAPLRISSGPAIQHAGDLAAILSSLSEGEVLFLDEIHRMSRPAEEMLYMAMEDFRVDIVVGKGAGATAIPLELPPFTLVGATTRAGLLPGPLRDRFGFTGHLEFYSVEELELVLRRSAGLLDLKVNSAGFSEIAGRSRGTPRIANRLLRRVRDWALVHGIEQIDARTASAALDMYEVDKRGLDRLDRSVLEALITKFGGGPVGLSTLAIAVGEEPETVETVAEPYLVREGLLGRTPRGRIAMAPAWTHLGYAVPEGVFGQEALALFEVEDLGVEPVAEWLPNGQ</sequence>
<keyword id="KW-0067">ATP-binding</keyword>
<keyword id="KW-0963">Cytoplasm</keyword>
<keyword id="KW-0227">DNA damage</keyword>
<keyword id="KW-0233">DNA recombination</keyword>
<keyword id="KW-0234">DNA repair</keyword>
<keyword id="KW-0238">DNA-binding</keyword>
<keyword id="KW-0378">Hydrolase</keyword>
<keyword id="KW-0547">Nucleotide-binding</keyword>
<keyword id="KW-1185">Reference proteome</keyword>
<comment type="function">
    <text evidence="1">The RuvA-RuvB-RuvC complex processes Holliday junction (HJ) DNA during genetic recombination and DNA repair, while the RuvA-RuvB complex plays an important role in the rescue of blocked DNA replication forks via replication fork reversal (RFR). RuvA specifically binds to HJ cruciform DNA, conferring on it an open structure. The RuvB hexamer acts as an ATP-dependent pump, pulling dsDNA into and through the RuvAB complex. RuvB forms 2 homohexamers on either side of HJ DNA bound by 1 or 2 RuvA tetramers; 4 subunits per hexamer contact DNA at a time. Coordinated motions by a converter formed by DNA-disengaged RuvB subunits stimulates ATP hydrolysis and nucleotide exchange. Immobilization of the converter enables RuvB to convert the ATP-contained energy into a lever motion, pulling 2 nucleotides of DNA out of the RuvA tetramer per ATP hydrolyzed, thus driving DNA branch migration. The RuvB motors rotate together with the DNA substrate, which together with the progressing nucleotide cycle form the mechanistic basis for DNA recombination by continuous HJ branch migration. Branch migration allows RuvC to scan DNA until it finds its consensus sequence, where it cleaves and resolves cruciform DNA.</text>
</comment>
<comment type="catalytic activity">
    <reaction evidence="1">
        <text>ATP + H2O = ADP + phosphate + H(+)</text>
        <dbReference type="Rhea" id="RHEA:13065"/>
        <dbReference type="ChEBI" id="CHEBI:15377"/>
        <dbReference type="ChEBI" id="CHEBI:15378"/>
        <dbReference type="ChEBI" id="CHEBI:30616"/>
        <dbReference type="ChEBI" id="CHEBI:43474"/>
        <dbReference type="ChEBI" id="CHEBI:456216"/>
    </reaction>
</comment>
<comment type="subunit">
    <text evidence="1">Homohexamer. Forms an RuvA(8)-RuvB(12)-Holliday junction (HJ) complex. HJ DNA is sandwiched between 2 RuvA tetramers; dsDNA enters through RuvA and exits via RuvB. An RuvB hexamer assembles on each DNA strand where it exits the tetramer. Each RuvB hexamer is contacted by two RuvA subunits (via domain III) on 2 adjacent RuvB subunits; this complex drives branch migration. In the full resolvosome a probable DNA-RuvA(4)-RuvB(12)-RuvC(2) complex forms which resolves the HJ.</text>
</comment>
<comment type="subcellular location">
    <subcellularLocation>
        <location evidence="1">Cytoplasm</location>
    </subcellularLocation>
</comment>
<comment type="domain">
    <text evidence="1">Has 3 domains, the large (RuvB-L) and small ATPase (RuvB-S) domains and the C-terminal head (RuvB-H) domain. The head domain binds DNA, while the ATPase domains jointly bind ATP, ADP or are empty depending on the state of the subunit in the translocation cycle. During a single DNA translocation step the structure of each domain remains the same, but their relative positions change.</text>
</comment>
<comment type="similarity">
    <text evidence="1">Belongs to the RuvB family.</text>
</comment>
<accession>A0JXB1</accession>
<name>RUVB_ARTS2</name>
<proteinExistence type="inferred from homology"/>
<gene>
    <name evidence="1" type="primary">ruvB</name>
    <name type="ordered locus">Arth_2301</name>
</gene>
<protein>
    <recommendedName>
        <fullName evidence="1">Holliday junction branch migration complex subunit RuvB</fullName>
        <ecNumber evidence="1">3.6.4.-</ecNumber>
    </recommendedName>
</protein>
<feature type="chain" id="PRO_0000322783" description="Holliday junction branch migration complex subunit RuvB">
    <location>
        <begin position="1"/>
        <end position="362"/>
    </location>
</feature>
<feature type="region of interest" description="Large ATPase domain (RuvB-L)" evidence="1">
    <location>
        <begin position="1"/>
        <end position="183"/>
    </location>
</feature>
<feature type="region of interest" description="Small ATPAse domain (RuvB-S)" evidence="1">
    <location>
        <begin position="184"/>
        <end position="254"/>
    </location>
</feature>
<feature type="region of interest" description="Head domain (RuvB-H)" evidence="1">
    <location>
        <begin position="257"/>
        <end position="362"/>
    </location>
</feature>
<feature type="binding site" evidence="1">
    <location>
        <position position="22"/>
    </location>
    <ligand>
        <name>ATP</name>
        <dbReference type="ChEBI" id="CHEBI:30616"/>
    </ligand>
</feature>
<feature type="binding site" evidence="1">
    <location>
        <position position="23"/>
    </location>
    <ligand>
        <name>ATP</name>
        <dbReference type="ChEBI" id="CHEBI:30616"/>
    </ligand>
</feature>
<feature type="binding site" evidence="1">
    <location>
        <position position="64"/>
    </location>
    <ligand>
        <name>ATP</name>
        <dbReference type="ChEBI" id="CHEBI:30616"/>
    </ligand>
</feature>
<feature type="binding site" evidence="1">
    <location>
        <position position="67"/>
    </location>
    <ligand>
        <name>ATP</name>
        <dbReference type="ChEBI" id="CHEBI:30616"/>
    </ligand>
</feature>
<feature type="binding site" evidence="1">
    <location>
        <position position="68"/>
    </location>
    <ligand>
        <name>ATP</name>
        <dbReference type="ChEBI" id="CHEBI:30616"/>
    </ligand>
</feature>
<feature type="binding site" evidence="1">
    <location>
        <position position="68"/>
    </location>
    <ligand>
        <name>Mg(2+)</name>
        <dbReference type="ChEBI" id="CHEBI:18420"/>
    </ligand>
</feature>
<feature type="binding site" evidence="1">
    <location>
        <position position="69"/>
    </location>
    <ligand>
        <name>ATP</name>
        <dbReference type="ChEBI" id="CHEBI:30616"/>
    </ligand>
</feature>
<feature type="binding site" evidence="1">
    <location>
        <begin position="130"/>
        <end position="132"/>
    </location>
    <ligand>
        <name>ATP</name>
        <dbReference type="ChEBI" id="CHEBI:30616"/>
    </ligand>
</feature>
<feature type="binding site" evidence="1">
    <location>
        <position position="173"/>
    </location>
    <ligand>
        <name>ATP</name>
        <dbReference type="ChEBI" id="CHEBI:30616"/>
    </ligand>
</feature>
<feature type="binding site" evidence="1">
    <location>
        <position position="183"/>
    </location>
    <ligand>
        <name>ATP</name>
        <dbReference type="ChEBI" id="CHEBI:30616"/>
    </ligand>
</feature>
<feature type="binding site" evidence="1">
    <location>
        <position position="220"/>
    </location>
    <ligand>
        <name>ATP</name>
        <dbReference type="ChEBI" id="CHEBI:30616"/>
    </ligand>
</feature>
<feature type="binding site" evidence="1">
    <location>
        <position position="312"/>
    </location>
    <ligand>
        <name>DNA</name>
        <dbReference type="ChEBI" id="CHEBI:16991"/>
    </ligand>
</feature>
<feature type="binding site" evidence="1">
    <location>
        <position position="317"/>
    </location>
    <ligand>
        <name>DNA</name>
        <dbReference type="ChEBI" id="CHEBI:16991"/>
    </ligand>
</feature>
<organism>
    <name type="scientific">Arthrobacter sp. (strain FB24)</name>
    <dbReference type="NCBI Taxonomy" id="290399"/>
    <lineage>
        <taxon>Bacteria</taxon>
        <taxon>Bacillati</taxon>
        <taxon>Actinomycetota</taxon>
        <taxon>Actinomycetes</taxon>
        <taxon>Micrococcales</taxon>
        <taxon>Micrococcaceae</taxon>
        <taxon>Arthrobacter</taxon>
    </lineage>
</organism>
<dbReference type="EC" id="3.6.4.-" evidence="1"/>
<dbReference type="EMBL" id="CP000454">
    <property type="protein sequence ID" value="ABK03681.1"/>
    <property type="molecule type" value="Genomic_DNA"/>
</dbReference>
<dbReference type="RefSeq" id="WP_011692145.1">
    <property type="nucleotide sequence ID" value="NC_008541.1"/>
</dbReference>
<dbReference type="SMR" id="A0JXB1"/>
<dbReference type="STRING" id="290399.Arth_2301"/>
<dbReference type="KEGG" id="art:Arth_2301"/>
<dbReference type="eggNOG" id="COG2255">
    <property type="taxonomic scope" value="Bacteria"/>
</dbReference>
<dbReference type="HOGENOM" id="CLU_055599_1_0_11"/>
<dbReference type="OrthoDB" id="9804478at2"/>
<dbReference type="Proteomes" id="UP000000754">
    <property type="component" value="Chromosome"/>
</dbReference>
<dbReference type="GO" id="GO:0005737">
    <property type="term" value="C:cytoplasm"/>
    <property type="evidence" value="ECO:0007669"/>
    <property type="project" value="UniProtKB-SubCell"/>
</dbReference>
<dbReference type="GO" id="GO:0048476">
    <property type="term" value="C:Holliday junction resolvase complex"/>
    <property type="evidence" value="ECO:0007669"/>
    <property type="project" value="UniProtKB-UniRule"/>
</dbReference>
<dbReference type="GO" id="GO:0005524">
    <property type="term" value="F:ATP binding"/>
    <property type="evidence" value="ECO:0007669"/>
    <property type="project" value="UniProtKB-UniRule"/>
</dbReference>
<dbReference type="GO" id="GO:0016887">
    <property type="term" value="F:ATP hydrolysis activity"/>
    <property type="evidence" value="ECO:0007669"/>
    <property type="project" value="InterPro"/>
</dbReference>
<dbReference type="GO" id="GO:0000400">
    <property type="term" value="F:four-way junction DNA binding"/>
    <property type="evidence" value="ECO:0007669"/>
    <property type="project" value="UniProtKB-UniRule"/>
</dbReference>
<dbReference type="GO" id="GO:0009378">
    <property type="term" value="F:four-way junction helicase activity"/>
    <property type="evidence" value="ECO:0007669"/>
    <property type="project" value="InterPro"/>
</dbReference>
<dbReference type="GO" id="GO:0006310">
    <property type="term" value="P:DNA recombination"/>
    <property type="evidence" value="ECO:0007669"/>
    <property type="project" value="UniProtKB-UniRule"/>
</dbReference>
<dbReference type="GO" id="GO:0006281">
    <property type="term" value="P:DNA repair"/>
    <property type="evidence" value="ECO:0007669"/>
    <property type="project" value="UniProtKB-UniRule"/>
</dbReference>
<dbReference type="CDD" id="cd00009">
    <property type="entry name" value="AAA"/>
    <property type="match status" value="1"/>
</dbReference>
<dbReference type="Gene3D" id="1.10.8.60">
    <property type="match status" value="1"/>
</dbReference>
<dbReference type="Gene3D" id="3.40.50.300">
    <property type="entry name" value="P-loop containing nucleotide triphosphate hydrolases"/>
    <property type="match status" value="1"/>
</dbReference>
<dbReference type="Gene3D" id="1.10.10.10">
    <property type="entry name" value="Winged helix-like DNA-binding domain superfamily/Winged helix DNA-binding domain"/>
    <property type="match status" value="1"/>
</dbReference>
<dbReference type="HAMAP" id="MF_00016">
    <property type="entry name" value="DNA_HJ_migration_RuvB"/>
    <property type="match status" value="1"/>
</dbReference>
<dbReference type="InterPro" id="IPR003593">
    <property type="entry name" value="AAA+_ATPase"/>
</dbReference>
<dbReference type="InterPro" id="IPR041445">
    <property type="entry name" value="AAA_lid_4"/>
</dbReference>
<dbReference type="InterPro" id="IPR004605">
    <property type="entry name" value="DNA_helicase_Holl-junc_RuvB"/>
</dbReference>
<dbReference type="InterPro" id="IPR027417">
    <property type="entry name" value="P-loop_NTPase"/>
</dbReference>
<dbReference type="InterPro" id="IPR008824">
    <property type="entry name" value="RuvB-like_N"/>
</dbReference>
<dbReference type="InterPro" id="IPR008823">
    <property type="entry name" value="RuvB_C"/>
</dbReference>
<dbReference type="InterPro" id="IPR036388">
    <property type="entry name" value="WH-like_DNA-bd_sf"/>
</dbReference>
<dbReference type="InterPro" id="IPR036390">
    <property type="entry name" value="WH_DNA-bd_sf"/>
</dbReference>
<dbReference type="NCBIfam" id="NF000868">
    <property type="entry name" value="PRK00080.1"/>
    <property type="match status" value="1"/>
</dbReference>
<dbReference type="NCBIfam" id="TIGR00635">
    <property type="entry name" value="ruvB"/>
    <property type="match status" value="1"/>
</dbReference>
<dbReference type="PANTHER" id="PTHR42848">
    <property type="match status" value="1"/>
</dbReference>
<dbReference type="PANTHER" id="PTHR42848:SF1">
    <property type="entry name" value="HOLLIDAY JUNCTION BRANCH MIGRATION COMPLEX SUBUNIT RUVB"/>
    <property type="match status" value="1"/>
</dbReference>
<dbReference type="Pfam" id="PF17864">
    <property type="entry name" value="AAA_lid_4"/>
    <property type="match status" value="1"/>
</dbReference>
<dbReference type="Pfam" id="PF05491">
    <property type="entry name" value="RuvB_C"/>
    <property type="match status" value="1"/>
</dbReference>
<dbReference type="Pfam" id="PF05496">
    <property type="entry name" value="RuvB_N"/>
    <property type="match status" value="1"/>
</dbReference>
<dbReference type="SMART" id="SM00382">
    <property type="entry name" value="AAA"/>
    <property type="match status" value="1"/>
</dbReference>
<dbReference type="SUPFAM" id="SSF52540">
    <property type="entry name" value="P-loop containing nucleoside triphosphate hydrolases"/>
    <property type="match status" value="1"/>
</dbReference>
<dbReference type="SUPFAM" id="SSF46785">
    <property type="entry name" value="Winged helix' DNA-binding domain"/>
    <property type="match status" value="1"/>
</dbReference>
<reference key="1">
    <citation type="journal article" date="2013" name="Stand. Genomic Sci.">
        <title>Complete genome sequence of Arthrobacter sp. strain FB24.</title>
        <authorList>
            <person name="Nakatsu C.H."/>
            <person name="Barabote R."/>
            <person name="Thompson S."/>
            <person name="Bruce D."/>
            <person name="Detter C."/>
            <person name="Brettin T."/>
            <person name="Han C."/>
            <person name="Beasley F."/>
            <person name="Chen W."/>
            <person name="Konopka A."/>
            <person name="Xie G."/>
        </authorList>
    </citation>
    <scope>NUCLEOTIDE SEQUENCE [LARGE SCALE GENOMIC DNA]</scope>
    <source>
        <strain>FB24</strain>
    </source>
</reference>
<evidence type="ECO:0000255" key="1">
    <source>
        <dbReference type="HAMAP-Rule" id="MF_00016"/>
    </source>
</evidence>